<sequence length="203" mass="22086">MFEGPVQDLIDELGKLPGIGPKSAQRIAFHLLSVEPPDIDRLTAVLNRIRDGVKFCEVCGNVSDADRCRICSDPRRDASLVCVVEEPKDVQAVERTREFRGRYHVLGGALDPLSGVGPDQLRIRELLNRIGERVDGVDVAEVIIATDPNTEGEATATYLVRMLRDIPGLTVTRIASGLPMGGDLEFADELTLGRALAGRRAMA</sequence>
<organism>
    <name type="scientific">Mycobacterium sp. (strain KMS)</name>
    <dbReference type="NCBI Taxonomy" id="189918"/>
    <lineage>
        <taxon>Bacteria</taxon>
        <taxon>Bacillati</taxon>
        <taxon>Actinomycetota</taxon>
        <taxon>Actinomycetes</taxon>
        <taxon>Mycobacteriales</taxon>
        <taxon>Mycobacteriaceae</taxon>
        <taxon>Mycobacterium</taxon>
    </lineage>
</organism>
<protein>
    <recommendedName>
        <fullName evidence="1">Recombination protein RecR</fullName>
    </recommendedName>
</protein>
<feature type="chain" id="PRO_0000322914" description="Recombination protein RecR">
    <location>
        <begin position="1"/>
        <end position="203"/>
    </location>
</feature>
<feature type="domain" description="Toprim" evidence="1">
    <location>
        <begin position="79"/>
        <end position="179"/>
    </location>
</feature>
<feature type="zinc finger region" description="C4-type" evidence="1">
    <location>
        <begin position="56"/>
        <end position="71"/>
    </location>
</feature>
<keyword id="KW-0227">DNA damage</keyword>
<keyword id="KW-0233">DNA recombination</keyword>
<keyword id="KW-0234">DNA repair</keyword>
<keyword id="KW-0479">Metal-binding</keyword>
<keyword id="KW-0862">Zinc</keyword>
<keyword id="KW-0863">Zinc-finger</keyword>
<name>RECR_MYCSK</name>
<gene>
    <name evidence="1" type="primary">recR</name>
    <name type="ordered locus">Mkms_4992</name>
</gene>
<accession>A1UMX3</accession>
<reference key="1">
    <citation type="submission" date="2006-12" db="EMBL/GenBank/DDBJ databases">
        <title>Complete sequence of chromosome of Mycobacterium sp. KMS.</title>
        <authorList>
            <consortium name="US DOE Joint Genome Institute"/>
            <person name="Copeland A."/>
            <person name="Lucas S."/>
            <person name="Lapidus A."/>
            <person name="Barry K."/>
            <person name="Detter J.C."/>
            <person name="Glavina del Rio T."/>
            <person name="Hammon N."/>
            <person name="Israni S."/>
            <person name="Dalin E."/>
            <person name="Tice H."/>
            <person name="Pitluck S."/>
            <person name="Kiss H."/>
            <person name="Brettin T."/>
            <person name="Bruce D."/>
            <person name="Han C."/>
            <person name="Tapia R."/>
            <person name="Gilna P."/>
            <person name="Schmutz J."/>
            <person name="Larimer F."/>
            <person name="Land M."/>
            <person name="Hauser L."/>
            <person name="Kyrpides N."/>
            <person name="Mikhailova N."/>
            <person name="Miller C.D."/>
            <person name="Richardson P."/>
        </authorList>
    </citation>
    <scope>NUCLEOTIDE SEQUENCE [LARGE SCALE GENOMIC DNA]</scope>
    <source>
        <strain>KMS</strain>
    </source>
</reference>
<proteinExistence type="inferred from homology"/>
<comment type="function">
    <text evidence="1">May play a role in DNA repair. It seems to be involved in an RecBC-independent recombinational process of DNA repair. It may act with RecF and RecO.</text>
</comment>
<comment type="similarity">
    <text evidence="1">Belongs to the RecR family.</text>
</comment>
<evidence type="ECO:0000255" key="1">
    <source>
        <dbReference type="HAMAP-Rule" id="MF_00017"/>
    </source>
</evidence>
<dbReference type="EMBL" id="CP000518">
    <property type="protein sequence ID" value="ABL94181.1"/>
    <property type="molecule type" value="Genomic_DNA"/>
</dbReference>
<dbReference type="SMR" id="A1UMX3"/>
<dbReference type="STRING" id="189918.Mkms_4992"/>
<dbReference type="KEGG" id="mkm:Mkms_4992"/>
<dbReference type="HOGENOM" id="CLU_060739_1_0_11"/>
<dbReference type="OrthoDB" id="9802672at2"/>
<dbReference type="GO" id="GO:0003677">
    <property type="term" value="F:DNA binding"/>
    <property type="evidence" value="ECO:0007669"/>
    <property type="project" value="UniProtKB-UniRule"/>
</dbReference>
<dbReference type="GO" id="GO:0008270">
    <property type="term" value="F:zinc ion binding"/>
    <property type="evidence" value="ECO:0007669"/>
    <property type="project" value="UniProtKB-KW"/>
</dbReference>
<dbReference type="GO" id="GO:0006310">
    <property type="term" value="P:DNA recombination"/>
    <property type="evidence" value="ECO:0007669"/>
    <property type="project" value="UniProtKB-UniRule"/>
</dbReference>
<dbReference type="GO" id="GO:0006281">
    <property type="term" value="P:DNA repair"/>
    <property type="evidence" value="ECO:0007669"/>
    <property type="project" value="UniProtKB-UniRule"/>
</dbReference>
<dbReference type="CDD" id="cd01025">
    <property type="entry name" value="TOPRIM_recR"/>
    <property type="match status" value="1"/>
</dbReference>
<dbReference type="Gene3D" id="3.30.60.80">
    <property type="match status" value="1"/>
</dbReference>
<dbReference type="Gene3D" id="3.40.1360.10">
    <property type="match status" value="1"/>
</dbReference>
<dbReference type="Gene3D" id="6.10.250.240">
    <property type="match status" value="1"/>
</dbReference>
<dbReference type="Gene3D" id="1.10.8.420">
    <property type="entry name" value="RecR Domain 1"/>
    <property type="match status" value="1"/>
</dbReference>
<dbReference type="HAMAP" id="MF_00017">
    <property type="entry name" value="RecR"/>
    <property type="match status" value="1"/>
</dbReference>
<dbReference type="InterPro" id="IPR000093">
    <property type="entry name" value="DNA_Rcmb_RecR"/>
</dbReference>
<dbReference type="InterPro" id="IPR003583">
    <property type="entry name" value="Hlx-hairpin-Hlx_DNA-bd_motif"/>
</dbReference>
<dbReference type="InterPro" id="IPR023627">
    <property type="entry name" value="Rcmb_RecR"/>
</dbReference>
<dbReference type="InterPro" id="IPR015967">
    <property type="entry name" value="Rcmb_RecR_Znf"/>
</dbReference>
<dbReference type="InterPro" id="IPR006171">
    <property type="entry name" value="TOPRIM_dom"/>
</dbReference>
<dbReference type="InterPro" id="IPR034137">
    <property type="entry name" value="TOPRIM_RecR"/>
</dbReference>
<dbReference type="NCBIfam" id="TIGR00615">
    <property type="entry name" value="recR"/>
    <property type="match status" value="1"/>
</dbReference>
<dbReference type="PANTHER" id="PTHR30446">
    <property type="entry name" value="RECOMBINATION PROTEIN RECR"/>
    <property type="match status" value="1"/>
</dbReference>
<dbReference type="PANTHER" id="PTHR30446:SF0">
    <property type="entry name" value="RECOMBINATION PROTEIN RECR"/>
    <property type="match status" value="1"/>
</dbReference>
<dbReference type="Pfam" id="PF21175">
    <property type="entry name" value="RecR_C"/>
    <property type="match status" value="1"/>
</dbReference>
<dbReference type="Pfam" id="PF21176">
    <property type="entry name" value="RecR_HhH"/>
    <property type="match status" value="1"/>
</dbReference>
<dbReference type="Pfam" id="PF02132">
    <property type="entry name" value="RecR_ZnF"/>
    <property type="match status" value="1"/>
</dbReference>
<dbReference type="Pfam" id="PF13662">
    <property type="entry name" value="Toprim_4"/>
    <property type="match status" value="1"/>
</dbReference>
<dbReference type="SMART" id="SM00278">
    <property type="entry name" value="HhH1"/>
    <property type="match status" value="1"/>
</dbReference>
<dbReference type="SMART" id="SM00493">
    <property type="entry name" value="TOPRIM"/>
    <property type="match status" value="1"/>
</dbReference>
<dbReference type="SUPFAM" id="SSF111304">
    <property type="entry name" value="Recombination protein RecR"/>
    <property type="match status" value="1"/>
</dbReference>
<dbReference type="PROSITE" id="PS01300">
    <property type="entry name" value="RECR"/>
    <property type="match status" value="1"/>
</dbReference>
<dbReference type="PROSITE" id="PS50880">
    <property type="entry name" value="TOPRIM"/>
    <property type="match status" value="1"/>
</dbReference>